<accession>Q86Z65</accession>
<proteinExistence type="evidence at transcript level"/>
<protein>
    <recommendedName>
        <fullName evidence="14">Trichothecene 8-O-acetyltransferase</fullName>
        <ecNumber evidence="16">2.3.1.-</ecNumber>
    </recommendedName>
    <alternativeName>
        <fullName evidence="14">Trichothecene biosynhesis protein 16</fullName>
    </alternativeName>
</protein>
<organism>
    <name type="scientific">Fusarium sporotrichioides</name>
    <dbReference type="NCBI Taxonomy" id="5514"/>
    <lineage>
        <taxon>Eukaryota</taxon>
        <taxon>Fungi</taxon>
        <taxon>Dikarya</taxon>
        <taxon>Ascomycota</taxon>
        <taxon>Pezizomycotina</taxon>
        <taxon>Sordariomycetes</taxon>
        <taxon>Hypocreomycetidae</taxon>
        <taxon>Hypocreales</taxon>
        <taxon>Nectriaceae</taxon>
        <taxon>Fusarium</taxon>
    </lineage>
</organism>
<sequence>MALSRCLRTRTAFLSPLDQLNSSFYIRWSLVLHAKDRDKAVNRLSKGLNAVTSKLPFLKGRINYHTDTANNKIASASRAVISMSDDSPNLSLRELRPAKELPSLARIKQQGAPSHLFTDDLYSLPIFIDTTSKQSHPVLKTTYAPIEGGLILNICVHHGVMDGQGLATLTDLWASFTRQQDQNENEVQQPKNLPDPDEPLTRTARLATAINATADPEITDIETSLQRYRNDRILEQNIAASTGDSRKKTSRIFAFSSNKLKDAKEVLANNGCHVTTNSILNAAVWSNLTRVRLSRRTQLPPTPFARFTQMVDGRRQLLPKINKPGPYMGNVVLTSSADVSLDTLVATGFFNYLSVSLMAPVAQAIYDASRKVTTEYIDGFLKTLQKVDDPASLGIGSMSQHGVDFISTSVANAPFYECDFGPSLSEDSAGGKEGKPVFVRYPYIDWADGNMILLPRRRQPTENDETIEAYIMLAEDDLVALAEDPGFCSWLKE</sequence>
<reference key="1">
    <citation type="journal article" date="2003" name="Appl. Environ. Microbiol.">
        <title>Tri16 is required for esterification of position C-8 during trichothecene mycotoxin production by Fusarium sporotrichioides.</title>
        <authorList>
            <person name="Peplow A.W."/>
            <person name="Meek I.B."/>
            <person name="Wiles M.C."/>
            <person name="Phillips T.D."/>
            <person name="Beremand M.N."/>
        </authorList>
    </citation>
    <scope>NUCLEOTIDE SEQUENCE [GENOMIC DNA]</scope>
    <scope>FUNCTION</scope>
    <scope>DISRUPTION PHENOTYPE</scope>
    <scope>PATHWAY</scope>
    <source>
        <strain>ATCC 24631 / NRRL 3299</strain>
    </source>
</reference>
<reference key="2">
    <citation type="journal article" date="2003" name="J. Agric. Food Chem.">
        <title>Characterization of a fusarium 2-gene cluster involved in trichothecene C-8 modification.</title>
        <authorList>
            <person name="Brown D.W."/>
            <person name="Proctor R.H."/>
            <person name="Dyer R.B."/>
            <person name="Plattner R.D."/>
        </authorList>
    </citation>
    <scope>NUCLEOTIDE SEQUENCE [GENOMIC DNA]</scope>
    <source>
        <strain>ATCC 24631 / NRRL 3299</strain>
    </source>
</reference>
<reference key="3">
    <citation type="journal article" date="1986" name="Arch. Biochem. Biophys.">
        <title>Purification and characterization of the sesquiterpene cyclase trichodiene synthetase from Fusarium sporotrichioides.</title>
        <authorList>
            <person name="Hohn T.M."/>
            <person name="Vanmiddlesworth F."/>
        </authorList>
    </citation>
    <scope>FUNCTION</scope>
</reference>
<reference key="4">
    <citation type="journal article" date="1990" name="Appl. Environ. Microbiol.">
        <title>Bioconversion of possible T-2 toxin precursors by a mutant strain of Fusarium sporotrichioides NRRL 3299.</title>
        <authorList>
            <person name="McCormick S.P."/>
            <person name="Taylor S.L."/>
            <person name="Plattner R.D."/>
            <person name="Beremand M.N."/>
        </authorList>
    </citation>
    <scope>FUNCTION</scope>
</reference>
<reference key="5">
    <citation type="journal article" date="1995" name="Mol. Gen. Genet.">
        <title>The Tri4 gene of Fusarium sporotrichioides encodes a cytochrome P450 monooxygenase involved in trichothecene biosynthesis.</title>
        <authorList>
            <person name="Hohn T.M."/>
            <person name="Desjardins A.E."/>
            <person name="McCormick S.P."/>
        </authorList>
    </citation>
    <scope>FUNCTION</scope>
</reference>
<reference key="6">
    <citation type="journal article" date="1996" name="Appl. Environ. Microbiol.">
        <title>Isolation and characterization of Tri3, a gene encoding 15-O-acetyltransferase from Fusarium sporotrichioides.</title>
        <authorList>
            <person name="McCormick S.P."/>
            <person name="Hohn T.M."/>
            <person name="Desjardins A.E."/>
        </authorList>
    </citation>
    <scope>FUNCTION</scope>
</reference>
<reference key="7">
    <citation type="journal article" date="1998" name="Appl. Environ. Microbiol.">
        <title>The TRI11 gene of Fusarium sporotrichioides encodes a cytochrome P-450 monooxygenase required for C-15 hydroxylation in trichothecene biosynthesis.</title>
        <authorList>
            <person name="Alexander N.J."/>
            <person name="Hohn T.M."/>
            <person name="McCormick S.P."/>
        </authorList>
    </citation>
    <scope>FUNCTION</scope>
</reference>
<reference key="8">
    <citation type="journal article" date="1999" name="Appl. Environ. Microbiol.">
        <title>Disruption of TRI101, the gene encoding trichothecene 3-O-acetyltransferase, from Fusarium sporotrichioides.</title>
        <authorList>
            <person name="McCormick S.P."/>
            <person name="Alexander N.J."/>
            <person name="Trapp S.E."/>
            <person name="Hohn T.M."/>
        </authorList>
    </citation>
    <scope>FUNCTION</scope>
</reference>
<reference key="9">
    <citation type="journal article" date="2001" name="Fungal Genet. Biol.">
        <title>A genetic and biochemical approach to study trichothecene diversity in Fusarium sporotrichioides and Fusarium graminearum.</title>
        <authorList>
            <person name="Brown D.W."/>
            <person name="McCormick S.P."/>
            <person name="Alexander N.J."/>
            <person name="Proctor R.H."/>
            <person name="Desjardins A.E."/>
        </authorList>
    </citation>
    <scope>FUNCTION</scope>
    <source>
        <strain>ATCC 24631 / NRRL 3299</strain>
    </source>
</reference>
<reference key="10">
    <citation type="journal article" date="2002" name="Appl. Environ. Microbiol.">
        <title>Fusarium Tri8 encodes a trichothecene C-3 esterase.</title>
        <authorList>
            <person name="McCormick S.P."/>
            <person name="Alexander N.J."/>
        </authorList>
    </citation>
    <scope>FUNCTION</scope>
</reference>
<reference key="11">
    <citation type="journal article" date="2002" name="Fungal Genet. Biol.">
        <title>Inactivation of a cytochrome P-450 is a determinant of trichothecene diversity in Fusarium species.</title>
        <authorList>
            <person name="Brown D.W."/>
            <person name="McCormick S.P."/>
            <person name="Alexander N.J."/>
            <person name="Proctor R.H."/>
            <person name="Desjardins A.E."/>
        </authorList>
    </citation>
    <scope>FUNCTION</scope>
</reference>
<reference key="12">
    <citation type="journal article" date="2003" name="Appl. Environ. Microbiol.">
        <title>Tri1 encodes the cytochrome P450 monooxygenase for C-8 hydroxylation during trichothecene biosynthesis in Fusarium sporotrichioides and resides upstream of another new Tri gene.</title>
        <authorList>
            <person name="Meek I.B."/>
            <person name="Peplow A.W."/>
            <person name="Ake C. Jr."/>
            <person name="Phillips T.D."/>
            <person name="Beremand M.N."/>
        </authorList>
    </citation>
    <scope>FUNCTION</scope>
    <scope>INDUCTION</scope>
</reference>
<reference key="13">
    <citation type="journal article" date="2006" name="Can. J. Microbiol.">
        <title>Fusarium Tri4 encodes a multifunctional oxygenase required for trichothecene biosynthesis.</title>
        <authorList>
            <person name="McCormick S.P."/>
            <person name="Alexander N.J."/>
            <person name="Proctor R.H."/>
        </authorList>
    </citation>
    <scope>FUNCTION</scope>
</reference>
<evidence type="ECO:0000256" key="1">
    <source>
        <dbReference type="SAM" id="MobiDB-lite"/>
    </source>
</evidence>
<evidence type="ECO:0000269" key="2">
    <source>
    </source>
</evidence>
<evidence type="ECO:0000269" key="3">
    <source>
    </source>
</evidence>
<evidence type="ECO:0000269" key="4">
    <source>
    </source>
</evidence>
<evidence type="ECO:0000269" key="5">
    <source>
    </source>
</evidence>
<evidence type="ECO:0000269" key="6">
    <source>
    </source>
</evidence>
<evidence type="ECO:0000269" key="7">
    <source>
    </source>
</evidence>
<evidence type="ECO:0000269" key="8">
    <source>
    </source>
</evidence>
<evidence type="ECO:0000269" key="9">
    <source>
    </source>
</evidence>
<evidence type="ECO:0000269" key="10">
    <source>
    </source>
</evidence>
<evidence type="ECO:0000269" key="11">
    <source>
    </source>
</evidence>
<evidence type="ECO:0000269" key="12">
    <source>
    </source>
</evidence>
<evidence type="ECO:0000269" key="13">
    <source>
    </source>
</evidence>
<evidence type="ECO:0000303" key="14">
    <source>
    </source>
</evidence>
<evidence type="ECO:0000305" key="15"/>
<evidence type="ECO:0000305" key="16">
    <source>
    </source>
</evidence>
<keyword id="KW-0012">Acyltransferase</keyword>
<keyword id="KW-0808">Transferase</keyword>
<dbReference type="EC" id="2.3.1.-" evidence="16"/>
<dbReference type="EMBL" id="AY187275">
    <property type="protein sequence ID" value="AAO31979.1"/>
    <property type="molecule type" value="Genomic_DNA"/>
</dbReference>
<dbReference type="EMBL" id="AY217783">
    <property type="protein sequence ID" value="AAO61771.1"/>
    <property type="molecule type" value="Genomic_DNA"/>
</dbReference>
<dbReference type="SMR" id="Q86Z65"/>
<dbReference type="BioCyc" id="MetaCyc:MONOMER-19569"/>
<dbReference type="UniPathway" id="UPA00267"/>
<dbReference type="GO" id="GO:0016747">
    <property type="term" value="F:acyltransferase activity, transferring groups other than amino-acyl groups"/>
    <property type="evidence" value="ECO:0007669"/>
    <property type="project" value="TreeGrafter"/>
</dbReference>
<dbReference type="Gene3D" id="3.30.559.10">
    <property type="entry name" value="Chloramphenicol acetyltransferase-like domain"/>
    <property type="match status" value="2"/>
</dbReference>
<dbReference type="InterPro" id="IPR023213">
    <property type="entry name" value="CAT-like_dom_sf"/>
</dbReference>
<dbReference type="InterPro" id="IPR050317">
    <property type="entry name" value="Plant_Fungal_Acyltransferase"/>
</dbReference>
<dbReference type="PANTHER" id="PTHR31642:SF310">
    <property type="entry name" value="FATTY ALCOHOL:CAFFEOYL-COA ACYLTRANSFERASE"/>
    <property type="match status" value="1"/>
</dbReference>
<dbReference type="PANTHER" id="PTHR31642">
    <property type="entry name" value="TRICHOTHECENE 3-O-ACETYLTRANSFERASE"/>
    <property type="match status" value="1"/>
</dbReference>
<dbReference type="Pfam" id="PF02458">
    <property type="entry name" value="Transferase"/>
    <property type="match status" value="1"/>
</dbReference>
<name>TRI16_FUSSP</name>
<comment type="function">
    <text evidence="2 3 4 5 6 7 8 9 10 11 12 13">Trichothecene 8-O-acetyltransferase; part of 2-gene cluster involved in trichothecene C-8 modification that mediates the biosynthesis of T2-toxin (PubMed:14532047, PubMed:14690377). The biosynthesis of trichothecenes begins with the cyclization of farnesyl diphosphate to trichodiene and is catalyzed by the trichodiene synthase TRI5 (PubMed:3800398). Trichodiene undergoes a series of oxygenations catalyzed by the cytochrome P450 monooxygenase TRI4 (PubMed:7651333). TRI4 controls the addition of four oxygens at C-2, C-3, C-11, and the C-12, C-13-epoxide to form the intermediate isotrichotriol (PubMed:16917519). Isotrichotriol then undergoes a non-enzymatic isomerization and cyclization to form isotrichodermol (PubMed:2317042). During this process, the oxygen at the C-2 position becomes the pyran ring oxygen and the hydroxyl group at C-11 is lost (PubMed:2317042). More complex type A trichothecenes are built by modifying isotrichodermol through a series of paired hydroxylation and acetylation or acylation steps (PubMed:11352533). Isotrichodermol is converted to isotrichodermin by the acetyltransferase TRI101 (PubMed:10583973). TRI101 encodes a C-3 transacetylase that acts as a self-protection or resistance factor during biosynthesis and that the presence of a free C-3 hydroxyl group is a key component of Fusarium trichothecene phytotoxicity (PubMed:10583973). A second hydroxyl group is added to C-15 by the trichothecene C-15 hydroxylase TRI11, producing 15-decalonectrin, which is then acetylated by TRI3, producing calonectrin (PubMed:8593041, PubMed:9435078). A third hydroxyl group is added at C-4 by the cytochrome P450 monooxygenase TRI13, converting calonectrin to 3,15-diacetoxyspirpenol, which is subsequently acetylated bythe acetyltransferase TRI7 (PubMed:11352533, PubMed:12135578). A fourth hydroxyl group is added to C-8 by the cytochrome P450 monooxygenase TRI1, followed by the addition of an isovaleryl moiety by TRI16 (PubMed:12620849, PubMed:14532047). Finally, the acetyl group is removed from the C-3 position by the trichothecene C-3 esterase TRI8 to produce T-2 toxin (PubMed:12039755).</text>
</comment>
<comment type="pathway">
    <text evidence="7">Sesquiterpene biosynthesis; trichothecene biosynthesis.</text>
</comment>
<comment type="induction">
    <text evidence="6">Expression is positively regulated by the TRI6 and TRI10 core trichothecenes biosynthesis gene cluster transcription factor (PubMed:12620849).</text>
</comment>
<comment type="disruption phenotype">
    <text evidence="7">Impairs the production of the three C-8 esterified compounds T-2 toxin, 8-propionyl-neosolaniol (P-NEO) and 8-isobutyryl-neosolaniol (B-NEO), and accumulates the C-8-hydroxylated compound neosolaniol (NEO) along with secondary levels of 4,15-diacetoxyscirpenol (DAS) (PubMed:14532047).</text>
</comment>
<comment type="miscellaneous">
    <text evidence="15">Trichothecenes are sesquiterpenoid toxins that act by inhibiting protein biosynthesis.</text>
</comment>
<gene>
    <name evidence="14" type="primary">TRI16</name>
    <name type="synonym">TRI15</name>
</gene>
<feature type="chain" id="PRO_0000442375" description="Trichothecene 8-O-acetyltransferase">
    <location>
        <begin position="1"/>
        <end position="493"/>
    </location>
</feature>
<feature type="region of interest" description="Disordered" evidence="1">
    <location>
        <begin position="180"/>
        <end position="199"/>
    </location>
</feature>
<feature type="compositionally biased region" description="Polar residues" evidence="1">
    <location>
        <begin position="180"/>
        <end position="191"/>
    </location>
</feature>